<reference key="1">
    <citation type="submission" date="2007-08" db="EMBL/GenBank/DDBJ databases">
        <title>Complete sequence of Shewanella sediminis HAW-EB3.</title>
        <authorList>
            <consortium name="US DOE Joint Genome Institute"/>
            <person name="Copeland A."/>
            <person name="Lucas S."/>
            <person name="Lapidus A."/>
            <person name="Barry K."/>
            <person name="Glavina del Rio T."/>
            <person name="Dalin E."/>
            <person name="Tice H."/>
            <person name="Pitluck S."/>
            <person name="Chertkov O."/>
            <person name="Brettin T."/>
            <person name="Bruce D."/>
            <person name="Detter J.C."/>
            <person name="Han C."/>
            <person name="Schmutz J."/>
            <person name="Larimer F."/>
            <person name="Land M."/>
            <person name="Hauser L."/>
            <person name="Kyrpides N."/>
            <person name="Kim E."/>
            <person name="Zhao J.-S."/>
            <person name="Richardson P."/>
        </authorList>
    </citation>
    <scope>NUCLEOTIDE SEQUENCE [LARGE SCALE GENOMIC DNA]</scope>
    <source>
        <strain>HAW-EB3</strain>
    </source>
</reference>
<accession>A8FU25</accession>
<keyword id="KW-0131">Cell cycle</keyword>
<keyword id="KW-0132">Cell division</keyword>
<keyword id="KW-0997">Cell inner membrane</keyword>
<keyword id="KW-1003">Cell membrane</keyword>
<keyword id="KW-0472">Membrane</keyword>
<keyword id="KW-1185">Reference proteome</keyword>
<keyword id="KW-0812">Transmembrane</keyword>
<keyword id="KW-1133">Transmembrane helix</keyword>
<evidence type="ECO:0000255" key="1">
    <source>
        <dbReference type="HAMAP-Rule" id="MF_00509"/>
    </source>
</evidence>
<evidence type="ECO:0000256" key="2">
    <source>
        <dbReference type="SAM" id="MobiDB-lite"/>
    </source>
</evidence>
<proteinExistence type="inferred from homology"/>
<comment type="function">
    <text evidence="1">Essential cell division protein that stabilizes the FtsZ protofilaments by cross-linking them and that serves as a cytoplasmic membrane anchor for the Z ring. Also required for the recruitment to the septal ring of downstream cell division proteins.</text>
</comment>
<comment type="subunit">
    <text evidence="1">Interacts with FtsZ via their C-terminal domains.</text>
</comment>
<comment type="subcellular location">
    <subcellularLocation>
        <location evidence="1">Cell inner membrane</location>
        <topology evidence="1">Single-pass type I membrane protein</topology>
    </subcellularLocation>
    <text evidence="1">Localizes to the Z ring in an FtsZ-dependent manner.</text>
</comment>
<comment type="similarity">
    <text evidence="1">Belongs to the ZipA family.</text>
</comment>
<gene>
    <name evidence="1" type="primary">zipA</name>
    <name type="ordered locus">Ssed_1737</name>
</gene>
<organism>
    <name type="scientific">Shewanella sediminis (strain HAW-EB3)</name>
    <dbReference type="NCBI Taxonomy" id="425104"/>
    <lineage>
        <taxon>Bacteria</taxon>
        <taxon>Pseudomonadati</taxon>
        <taxon>Pseudomonadota</taxon>
        <taxon>Gammaproteobacteria</taxon>
        <taxon>Alteromonadales</taxon>
        <taxon>Shewanellaceae</taxon>
        <taxon>Shewanella</taxon>
    </lineage>
</organism>
<sequence>MENLQLVLFVLGAIAIVAVLVHGFWSIRKQQPKSLKESPMTGFYKDQGATRDHQGFDADGIGQVRVRKGSPISDDERAEDEIDFAPKEPTLTSEGQMDSSVRQDENVAEAGDDFSLSDQPKQRVTRQRQEPVLSAEVQQEEINQMELGLGQEAAPNQSSLFESTVPELSPEPEPSIEVPEPVSEPVLESVPEPEPVAPEPEVLPEPQDVLVLHVVAAEGEELNGAELLPSLLSLNFKFGDMSIFHRHEDNAGTGKTLFSLANMVKPGVFNLDDMEQFTTEGVVLFMTLPCHGDPLRNFSIMLNSAHQLADDLSGQLLDGGRVAWCENTKQNYLQRIRTQNS</sequence>
<name>ZIPA_SHESH</name>
<dbReference type="EMBL" id="CP000821">
    <property type="protein sequence ID" value="ABV36348.1"/>
    <property type="molecule type" value="Genomic_DNA"/>
</dbReference>
<dbReference type="RefSeq" id="WP_012142084.1">
    <property type="nucleotide sequence ID" value="NC_009831.1"/>
</dbReference>
<dbReference type="SMR" id="A8FU25"/>
<dbReference type="STRING" id="425104.Ssed_1737"/>
<dbReference type="KEGG" id="sse:Ssed_1737"/>
<dbReference type="eggNOG" id="COG3115">
    <property type="taxonomic scope" value="Bacteria"/>
</dbReference>
<dbReference type="HOGENOM" id="CLU_030174_1_0_6"/>
<dbReference type="OrthoDB" id="7054914at2"/>
<dbReference type="Proteomes" id="UP000002015">
    <property type="component" value="Chromosome"/>
</dbReference>
<dbReference type="GO" id="GO:0032153">
    <property type="term" value="C:cell division site"/>
    <property type="evidence" value="ECO:0007669"/>
    <property type="project" value="UniProtKB-UniRule"/>
</dbReference>
<dbReference type="GO" id="GO:0005886">
    <property type="term" value="C:plasma membrane"/>
    <property type="evidence" value="ECO:0007669"/>
    <property type="project" value="UniProtKB-SubCell"/>
</dbReference>
<dbReference type="GO" id="GO:0000917">
    <property type="term" value="P:division septum assembly"/>
    <property type="evidence" value="ECO:0007669"/>
    <property type="project" value="TreeGrafter"/>
</dbReference>
<dbReference type="GO" id="GO:0043093">
    <property type="term" value="P:FtsZ-dependent cytokinesis"/>
    <property type="evidence" value="ECO:0007669"/>
    <property type="project" value="UniProtKB-UniRule"/>
</dbReference>
<dbReference type="Gene3D" id="3.30.1400.10">
    <property type="entry name" value="ZipA, C-terminal FtsZ-binding domain"/>
    <property type="match status" value="1"/>
</dbReference>
<dbReference type="HAMAP" id="MF_00509">
    <property type="entry name" value="ZipA"/>
    <property type="match status" value="1"/>
</dbReference>
<dbReference type="InterPro" id="IPR011919">
    <property type="entry name" value="Cell_div_ZipA"/>
</dbReference>
<dbReference type="InterPro" id="IPR007449">
    <property type="entry name" value="ZipA_FtsZ-bd_C"/>
</dbReference>
<dbReference type="InterPro" id="IPR036765">
    <property type="entry name" value="ZipA_FtsZ-bd_C_sf"/>
</dbReference>
<dbReference type="NCBIfam" id="TIGR02205">
    <property type="entry name" value="septum_zipA"/>
    <property type="match status" value="1"/>
</dbReference>
<dbReference type="PANTHER" id="PTHR38685">
    <property type="entry name" value="CELL DIVISION PROTEIN ZIPA"/>
    <property type="match status" value="1"/>
</dbReference>
<dbReference type="PANTHER" id="PTHR38685:SF1">
    <property type="entry name" value="CELL DIVISION PROTEIN ZIPA"/>
    <property type="match status" value="1"/>
</dbReference>
<dbReference type="Pfam" id="PF04354">
    <property type="entry name" value="ZipA_C"/>
    <property type="match status" value="1"/>
</dbReference>
<dbReference type="SMART" id="SM00771">
    <property type="entry name" value="ZipA_C"/>
    <property type="match status" value="1"/>
</dbReference>
<dbReference type="SUPFAM" id="SSF64383">
    <property type="entry name" value="Cell-division protein ZipA, C-terminal domain"/>
    <property type="match status" value="1"/>
</dbReference>
<protein>
    <recommendedName>
        <fullName evidence="1">Cell division protein ZipA</fullName>
    </recommendedName>
</protein>
<feature type="chain" id="PRO_1000081584" description="Cell division protein ZipA">
    <location>
        <begin position="1"/>
        <end position="341"/>
    </location>
</feature>
<feature type="topological domain" description="Periplasmic" evidence="1">
    <location>
        <begin position="1"/>
        <end position="6"/>
    </location>
</feature>
<feature type="transmembrane region" description="Helical" evidence="1">
    <location>
        <begin position="7"/>
        <end position="27"/>
    </location>
</feature>
<feature type="topological domain" description="Cytoplasmic" evidence="1">
    <location>
        <begin position="28"/>
        <end position="341"/>
    </location>
</feature>
<feature type="region of interest" description="Disordered" evidence="2">
    <location>
        <begin position="35"/>
        <end position="134"/>
    </location>
</feature>
<feature type="region of interest" description="Disordered" evidence="2">
    <location>
        <begin position="157"/>
        <end position="201"/>
    </location>
</feature>
<feature type="compositionally biased region" description="Polar residues" evidence="2">
    <location>
        <begin position="90"/>
        <end position="100"/>
    </location>
</feature>
<feature type="compositionally biased region" description="Low complexity" evidence="2">
    <location>
        <begin position="175"/>
        <end position="190"/>
    </location>
</feature>
<feature type="compositionally biased region" description="Pro residues" evidence="2">
    <location>
        <begin position="192"/>
        <end position="201"/>
    </location>
</feature>